<accession>Q9HM68</accession>
<evidence type="ECO:0000255" key="1">
    <source>
        <dbReference type="HAMAP-Rule" id="MF_00311"/>
    </source>
</evidence>
<sequence length="185" mass="21538">MSLEEVLKDIERDKEEKKKEIADAASRETAKIEKEREEKIQILQREYENRMREEGSRLYNSIIDKANVEARNIVRMRVQEILDQYGAKADELIKNLAKTKEYDDVLKKMIEVSRKALGPDCIVKVNTADKGRISDGNIKFEDIDPYGGVLATSRDGKIELDLRISSIRRDILERFKVRLYSMIED</sequence>
<keyword id="KW-0066">ATP synthesis</keyword>
<keyword id="KW-1003">Cell membrane</keyword>
<keyword id="KW-0375">Hydrogen ion transport</keyword>
<keyword id="KW-0406">Ion transport</keyword>
<keyword id="KW-0472">Membrane</keyword>
<keyword id="KW-1185">Reference proteome</keyword>
<keyword id="KW-0813">Transport</keyword>
<feature type="chain" id="PRO_0000117327" description="A-type ATP synthase subunit E">
    <location>
        <begin position="1"/>
        <end position="185"/>
    </location>
</feature>
<organism>
    <name type="scientific">Thermoplasma acidophilum (strain ATCC 25905 / DSM 1728 / JCM 9062 / NBRC 15155 / AMRC-C165)</name>
    <dbReference type="NCBI Taxonomy" id="273075"/>
    <lineage>
        <taxon>Archaea</taxon>
        <taxon>Methanobacteriati</taxon>
        <taxon>Thermoplasmatota</taxon>
        <taxon>Thermoplasmata</taxon>
        <taxon>Thermoplasmatales</taxon>
        <taxon>Thermoplasmataceae</taxon>
        <taxon>Thermoplasma</taxon>
    </lineage>
</organism>
<proteinExistence type="inferred from homology"/>
<dbReference type="EMBL" id="AL445063">
    <property type="protein sequence ID" value="CAC11150.1"/>
    <property type="molecule type" value="Genomic_DNA"/>
</dbReference>
<dbReference type="RefSeq" id="WP_010900428.1">
    <property type="nucleotide sequence ID" value="NC_002578.1"/>
</dbReference>
<dbReference type="SMR" id="Q9HM68"/>
<dbReference type="MINT" id="Q9HM68"/>
<dbReference type="STRING" id="273075.gene:9571216"/>
<dbReference type="PaxDb" id="273075-Ta0001"/>
<dbReference type="EnsemblBacteria" id="CAC11150">
    <property type="protein sequence ID" value="CAC11150"/>
    <property type="gene ID" value="CAC11150"/>
</dbReference>
<dbReference type="KEGG" id="tac:Ta0001"/>
<dbReference type="eggNOG" id="arCOG00869">
    <property type="taxonomic scope" value="Archaea"/>
</dbReference>
<dbReference type="HOGENOM" id="CLU_1458252_0_0_2"/>
<dbReference type="InParanoid" id="Q9HM68"/>
<dbReference type="OrthoDB" id="57284at2157"/>
<dbReference type="Proteomes" id="UP000001024">
    <property type="component" value="Chromosome"/>
</dbReference>
<dbReference type="GO" id="GO:0005886">
    <property type="term" value="C:plasma membrane"/>
    <property type="evidence" value="ECO:0007669"/>
    <property type="project" value="UniProtKB-SubCell"/>
</dbReference>
<dbReference type="GO" id="GO:0033178">
    <property type="term" value="C:proton-transporting two-sector ATPase complex, catalytic domain"/>
    <property type="evidence" value="ECO:0007669"/>
    <property type="project" value="InterPro"/>
</dbReference>
<dbReference type="GO" id="GO:0005524">
    <property type="term" value="F:ATP binding"/>
    <property type="evidence" value="ECO:0007669"/>
    <property type="project" value="UniProtKB-UniRule"/>
</dbReference>
<dbReference type="GO" id="GO:0046933">
    <property type="term" value="F:proton-transporting ATP synthase activity, rotational mechanism"/>
    <property type="evidence" value="ECO:0007669"/>
    <property type="project" value="UniProtKB-UniRule"/>
</dbReference>
<dbReference type="GO" id="GO:0046961">
    <property type="term" value="F:proton-transporting ATPase activity, rotational mechanism"/>
    <property type="evidence" value="ECO:0007669"/>
    <property type="project" value="InterPro"/>
</dbReference>
<dbReference type="GO" id="GO:0042777">
    <property type="term" value="P:proton motive force-driven plasma membrane ATP synthesis"/>
    <property type="evidence" value="ECO:0007669"/>
    <property type="project" value="UniProtKB-UniRule"/>
</dbReference>
<dbReference type="Gene3D" id="3.30.2320.30">
    <property type="entry name" value="ATP synthase, E subunit, C-terminal"/>
    <property type="match status" value="1"/>
</dbReference>
<dbReference type="HAMAP" id="MF_00311">
    <property type="entry name" value="ATP_synth_E_arch"/>
    <property type="match status" value="1"/>
</dbReference>
<dbReference type="InterPro" id="IPR038495">
    <property type="entry name" value="ATPase_E_C"/>
</dbReference>
<dbReference type="InterPro" id="IPR002842">
    <property type="entry name" value="ATPase_V1_Esu"/>
</dbReference>
<dbReference type="NCBIfam" id="NF002264">
    <property type="entry name" value="PRK01194.1"/>
    <property type="match status" value="1"/>
</dbReference>
<dbReference type="SUPFAM" id="SSF160527">
    <property type="entry name" value="V-type ATPase subunit E-like"/>
    <property type="match status" value="1"/>
</dbReference>
<gene>
    <name evidence="1" type="primary">atpE</name>
    <name type="ordered locus">Ta0001</name>
</gene>
<reference key="1">
    <citation type="journal article" date="2000" name="Nature">
        <title>The genome sequence of the thermoacidophilic scavenger Thermoplasma acidophilum.</title>
        <authorList>
            <person name="Ruepp A."/>
            <person name="Graml W."/>
            <person name="Santos-Martinez M.-L."/>
            <person name="Koretke K.K."/>
            <person name="Volker C."/>
            <person name="Mewes H.-W."/>
            <person name="Frishman D."/>
            <person name="Stocker S."/>
            <person name="Lupas A.N."/>
            <person name="Baumeister W."/>
        </authorList>
    </citation>
    <scope>NUCLEOTIDE SEQUENCE [LARGE SCALE GENOMIC DNA]</scope>
    <source>
        <strain>ATCC 25905 / DSM 1728 / JCM 9062 / NBRC 15155 / AMRC-C165</strain>
    </source>
</reference>
<protein>
    <recommendedName>
        <fullName evidence="1">A-type ATP synthase subunit E</fullName>
    </recommendedName>
</protein>
<comment type="function">
    <text evidence="1">Component of the A-type ATP synthase that produces ATP from ADP in the presence of a proton gradient across the membrane.</text>
</comment>
<comment type="subunit">
    <text evidence="1">Has multiple subunits with at least A(3), B(3), C, D, E, F, H, I and proteolipid K(x).</text>
</comment>
<comment type="subcellular location">
    <subcellularLocation>
        <location evidence="1">Cell membrane</location>
        <topology evidence="1">Peripheral membrane protein</topology>
    </subcellularLocation>
</comment>
<comment type="similarity">
    <text evidence="1">Belongs to the V-ATPase E subunit family.</text>
</comment>
<name>AATE_THEAC</name>